<gene>
    <name evidence="1" type="primary">thiC</name>
    <name type="synonym">thiA</name>
    <name type="ordered locus">BSU08790</name>
</gene>
<dbReference type="EC" id="4.1.99.17" evidence="1"/>
<dbReference type="EMBL" id="U26178">
    <property type="protein sequence ID" value="AAA68243.1"/>
    <property type="molecule type" value="Genomic_DNA"/>
</dbReference>
<dbReference type="EMBL" id="Z82044">
    <property type="protein sequence ID" value="CAB04805.1"/>
    <property type="molecule type" value="Genomic_DNA"/>
</dbReference>
<dbReference type="EMBL" id="AL009126">
    <property type="protein sequence ID" value="CAB12707.2"/>
    <property type="molecule type" value="Genomic_DNA"/>
</dbReference>
<dbReference type="PIR" id="D69722">
    <property type="entry name" value="D69722"/>
</dbReference>
<dbReference type="RefSeq" id="NP_388759.2">
    <property type="nucleotide sequence ID" value="NC_000964.3"/>
</dbReference>
<dbReference type="RefSeq" id="WP_003233473.1">
    <property type="nucleotide sequence ID" value="NZ_OZ025638.1"/>
</dbReference>
<dbReference type="SMR" id="P45740"/>
<dbReference type="FunCoup" id="P45740">
    <property type="interactions" value="553"/>
</dbReference>
<dbReference type="STRING" id="224308.BSU08790"/>
<dbReference type="PaxDb" id="224308-BSU08790"/>
<dbReference type="EnsemblBacteria" id="CAB12707">
    <property type="protein sequence ID" value="CAB12707"/>
    <property type="gene ID" value="BSU_08790"/>
</dbReference>
<dbReference type="GeneID" id="939745"/>
<dbReference type="KEGG" id="bsu:BSU08790"/>
<dbReference type="PATRIC" id="fig|224308.179.peg.949"/>
<dbReference type="eggNOG" id="COG0422">
    <property type="taxonomic scope" value="Bacteria"/>
</dbReference>
<dbReference type="InParanoid" id="P45740"/>
<dbReference type="OrthoDB" id="9805897at2"/>
<dbReference type="PhylomeDB" id="P45740"/>
<dbReference type="BioCyc" id="BSUB:BSU08790-MONOMER"/>
<dbReference type="BioCyc" id="MetaCyc:BSU08790-MONOMER"/>
<dbReference type="UniPathway" id="UPA00060"/>
<dbReference type="Proteomes" id="UP000001570">
    <property type="component" value="Chromosome"/>
</dbReference>
<dbReference type="GO" id="GO:0005829">
    <property type="term" value="C:cytosol"/>
    <property type="evidence" value="ECO:0000318"/>
    <property type="project" value="GO_Central"/>
</dbReference>
<dbReference type="GO" id="GO:0051539">
    <property type="term" value="F:4 iron, 4 sulfur cluster binding"/>
    <property type="evidence" value="ECO:0007669"/>
    <property type="project" value="UniProtKB-KW"/>
</dbReference>
<dbReference type="GO" id="GO:0016830">
    <property type="term" value="F:carbon-carbon lyase activity"/>
    <property type="evidence" value="ECO:0007669"/>
    <property type="project" value="InterPro"/>
</dbReference>
<dbReference type="GO" id="GO:0008270">
    <property type="term" value="F:zinc ion binding"/>
    <property type="evidence" value="ECO:0007669"/>
    <property type="project" value="UniProtKB-UniRule"/>
</dbReference>
<dbReference type="GO" id="GO:0009228">
    <property type="term" value="P:thiamine biosynthetic process"/>
    <property type="evidence" value="ECO:0000318"/>
    <property type="project" value="GO_Central"/>
</dbReference>
<dbReference type="GO" id="GO:0009229">
    <property type="term" value="P:thiamine diphosphate biosynthetic process"/>
    <property type="evidence" value="ECO:0007669"/>
    <property type="project" value="UniProtKB-UniRule"/>
</dbReference>
<dbReference type="FunFam" id="3.20.20.540:FF:000001">
    <property type="entry name" value="Phosphomethylpyrimidine synthase"/>
    <property type="match status" value="1"/>
</dbReference>
<dbReference type="Gene3D" id="6.10.250.620">
    <property type="match status" value="1"/>
</dbReference>
<dbReference type="Gene3D" id="3.20.20.540">
    <property type="entry name" value="Radical SAM ThiC family, central domain"/>
    <property type="match status" value="1"/>
</dbReference>
<dbReference type="HAMAP" id="MF_00089">
    <property type="entry name" value="ThiC"/>
    <property type="match status" value="1"/>
</dbReference>
<dbReference type="InterPro" id="IPR037509">
    <property type="entry name" value="ThiC"/>
</dbReference>
<dbReference type="InterPro" id="IPR025747">
    <property type="entry name" value="ThiC-associated_dom"/>
</dbReference>
<dbReference type="InterPro" id="IPR038521">
    <property type="entry name" value="ThiC/Bza_core_dom"/>
</dbReference>
<dbReference type="InterPro" id="IPR002817">
    <property type="entry name" value="ThiC/BzaA/B"/>
</dbReference>
<dbReference type="NCBIfam" id="NF006763">
    <property type="entry name" value="PRK09284.1"/>
    <property type="match status" value="1"/>
</dbReference>
<dbReference type="NCBIfam" id="NF009895">
    <property type="entry name" value="PRK13352.1"/>
    <property type="match status" value="1"/>
</dbReference>
<dbReference type="NCBIfam" id="TIGR00190">
    <property type="entry name" value="thiC"/>
    <property type="match status" value="1"/>
</dbReference>
<dbReference type="PANTHER" id="PTHR30557:SF1">
    <property type="entry name" value="PHOSPHOMETHYLPYRIMIDINE SYNTHASE, CHLOROPLASTIC"/>
    <property type="match status" value="1"/>
</dbReference>
<dbReference type="PANTHER" id="PTHR30557">
    <property type="entry name" value="THIAMINE BIOSYNTHESIS PROTEIN THIC"/>
    <property type="match status" value="1"/>
</dbReference>
<dbReference type="Pfam" id="PF13667">
    <property type="entry name" value="ThiC-associated"/>
    <property type="match status" value="1"/>
</dbReference>
<dbReference type="Pfam" id="PF01964">
    <property type="entry name" value="ThiC_Rad_SAM"/>
    <property type="match status" value="1"/>
</dbReference>
<dbReference type="SFLD" id="SFLDF00407">
    <property type="entry name" value="phosphomethylpyrimidine_syntha"/>
    <property type="match status" value="1"/>
</dbReference>
<dbReference type="SFLD" id="SFLDG01114">
    <property type="entry name" value="phosphomethylpyrimidine_syntha"/>
    <property type="match status" value="1"/>
</dbReference>
<dbReference type="SFLD" id="SFLDS00113">
    <property type="entry name" value="Radical_SAM_Phosphomethylpyrim"/>
    <property type="match status" value="1"/>
</dbReference>
<accession>P45740</accession>
<accession>P71090</accession>
<evidence type="ECO:0000255" key="1">
    <source>
        <dbReference type="HAMAP-Rule" id="MF_00089"/>
    </source>
</evidence>
<evidence type="ECO:0000269" key="2">
    <source>
    </source>
</evidence>
<evidence type="ECO:0000305" key="3"/>
<evidence type="ECO:0000305" key="4">
    <source>
    </source>
</evidence>
<evidence type="ECO:0000305" key="5">
    <source>
    </source>
</evidence>
<feature type="chain" id="PRO_0000152785" description="Phosphomethylpyrimidine synthase">
    <location>
        <begin position="1"/>
        <end position="590"/>
    </location>
</feature>
<feature type="binding site" evidence="1">
    <location>
        <position position="197"/>
    </location>
    <ligand>
        <name>substrate</name>
    </ligand>
</feature>
<feature type="binding site" evidence="1">
    <location>
        <position position="226"/>
    </location>
    <ligand>
        <name>substrate</name>
    </ligand>
</feature>
<feature type="binding site" evidence="1">
    <location>
        <position position="255"/>
    </location>
    <ligand>
        <name>substrate</name>
    </ligand>
</feature>
<feature type="binding site" evidence="1">
    <location>
        <position position="291"/>
    </location>
    <ligand>
        <name>substrate</name>
    </ligand>
</feature>
<feature type="binding site" evidence="1">
    <location>
        <begin position="311"/>
        <end position="313"/>
    </location>
    <ligand>
        <name>substrate</name>
    </ligand>
</feature>
<feature type="binding site" evidence="1">
    <location>
        <begin position="352"/>
        <end position="355"/>
    </location>
    <ligand>
        <name>substrate</name>
    </ligand>
</feature>
<feature type="binding site" evidence="1">
    <location>
        <position position="391"/>
    </location>
    <ligand>
        <name>substrate</name>
    </ligand>
</feature>
<feature type="binding site" evidence="1">
    <location>
        <position position="395"/>
    </location>
    <ligand>
        <name>Zn(2+)</name>
        <dbReference type="ChEBI" id="CHEBI:29105"/>
    </ligand>
</feature>
<feature type="binding site" evidence="1">
    <location>
        <position position="418"/>
    </location>
    <ligand>
        <name>substrate</name>
    </ligand>
</feature>
<feature type="binding site" evidence="1">
    <location>
        <position position="459"/>
    </location>
    <ligand>
        <name>Zn(2+)</name>
        <dbReference type="ChEBI" id="CHEBI:29105"/>
    </ligand>
</feature>
<feature type="binding site" evidence="1">
    <location>
        <position position="539"/>
    </location>
    <ligand>
        <name>[4Fe-4S] cluster</name>
        <dbReference type="ChEBI" id="CHEBI:49883"/>
        <note>4Fe-4S-S-AdoMet</note>
    </ligand>
</feature>
<feature type="binding site" evidence="1">
    <location>
        <position position="542"/>
    </location>
    <ligand>
        <name>[4Fe-4S] cluster</name>
        <dbReference type="ChEBI" id="CHEBI:49883"/>
        <note>4Fe-4S-S-AdoMet</note>
    </ligand>
</feature>
<feature type="binding site" evidence="1">
    <location>
        <position position="547"/>
    </location>
    <ligand>
        <name>[4Fe-4S] cluster</name>
        <dbReference type="ChEBI" id="CHEBI:49883"/>
        <note>4Fe-4S-S-AdoMet</note>
    </ligand>
</feature>
<feature type="sequence conflict" description="In Ref. 1; AAA68243 and 2; CAB04805." evidence="3" ref="1 2">
    <original>K</original>
    <variation>I</variation>
    <location>
        <position position="84"/>
    </location>
</feature>
<feature type="sequence conflict" description="In Ref. 1; AAA68243." evidence="3" ref="1">
    <original>K</original>
    <variation>Q</variation>
    <location>
        <position position="140"/>
    </location>
</feature>
<feature type="sequence conflict" description="In Ref. 1; AAA68243." evidence="3" ref="1">
    <original>AIIPS</original>
    <variation>RLFLP</variation>
    <location>
        <begin position="170"/>
        <end position="174"/>
    </location>
</feature>
<feature type="sequence conflict" description="In Ref. 1; AAA68243." evidence="3" ref="1">
    <original>F</original>
    <variation>L</variation>
    <location>
        <position position="334"/>
    </location>
</feature>
<feature type="sequence conflict" description="In Ref. 1; AAA68243." evidence="3" ref="1">
    <original>C</original>
    <variation>G</variation>
    <location>
        <position position="547"/>
    </location>
</feature>
<proteinExistence type="evidence at protein level"/>
<protein>
    <recommendedName>
        <fullName evidence="1">Phosphomethylpyrimidine synthase</fullName>
        <ecNumber evidence="1">4.1.99.17</ecNumber>
    </recommendedName>
    <alternativeName>
        <fullName evidence="1">Hydroxymethylpyrimidine phosphate synthase</fullName>
        <shortName evidence="1">HMP-P synthase</shortName>
        <shortName evidence="1">HMP-phosphate synthase</shortName>
        <shortName evidence="1">HMPP synthase</shortName>
    </alternativeName>
    <alternativeName>
        <fullName evidence="1">Thiamine biosynthesis protein ThiC</fullName>
    </alternativeName>
</protein>
<comment type="function">
    <text evidence="4 5">Catalyzes the synthesis of the hydroxymethylpyrimidine phosphate (HMP-P) moiety of thiamine from aminoimidazole ribotide (AIR) in a radical S-adenosyl-L-methionine (SAM)-dependent reaction.</text>
</comment>
<comment type="catalytic activity">
    <reaction evidence="1">
        <text>5-amino-1-(5-phospho-beta-D-ribosyl)imidazole + S-adenosyl-L-methionine = 4-amino-2-methyl-5-(phosphooxymethyl)pyrimidine + CO + 5'-deoxyadenosine + formate + L-methionine + 3 H(+)</text>
        <dbReference type="Rhea" id="RHEA:24840"/>
        <dbReference type="ChEBI" id="CHEBI:15378"/>
        <dbReference type="ChEBI" id="CHEBI:15740"/>
        <dbReference type="ChEBI" id="CHEBI:17245"/>
        <dbReference type="ChEBI" id="CHEBI:17319"/>
        <dbReference type="ChEBI" id="CHEBI:57844"/>
        <dbReference type="ChEBI" id="CHEBI:58354"/>
        <dbReference type="ChEBI" id="CHEBI:59789"/>
        <dbReference type="ChEBI" id="CHEBI:137981"/>
        <dbReference type="EC" id="4.1.99.17"/>
    </reaction>
</comment>
<comment type="cofactor">
    <cofactor evidence="1">
        <name>[4Fe-4S] cluster</name>
        <dbReference type="ChEBI" id="CHEBI:49883"/>
    </cofactor>
    <text evidence="1">Binds 1 [4Fe-4S] cluster per subunit. The cluster is coordinated with 3 cysteines and an exchangeable S-adenosyl-L-methionine.</text>
</comment>
<comment type="pathway">
    <text evidence="1">Cofactor biosynthesis; thiamine diphosphate biosynthesis.</text>
</comment>
<comment type="induction">
    <text evidence="2">Repressed by thiamine and 2-methyl-4-amino-5-hydroxymethylpyrimidine.</text>
</comment>
<comment type="disruption phenotype">
    <text evidence="2">Cells lacking this gene do not grow on minimal medium or on 4-methyl-5-(2-hydroxyethyl) thiazole, a thiamine precursor molecule. They do not synthesize 2-methyl-4-amino-5-hydroxymethylpyrimidine.</text>
</comment>
<comment type="similarity">
    <text evidence="1">Belongs to the ThiC family.</text>
</comment>
<keyword id="KW-0004">4Fe-4S</keyword>
<keyword id="KW-0408">Iron</keyword>
<keyword id="KW-0411">Iron-sulfur</keyword>
<keyword id="KW-0456">Lyase</keyword>
<keyword id="KW-0479">Metal-binding</keyword>
<keyword id="KW-1185">Reference proteome</keyword>
<keyword id="KW-0949">S-adenosyl-L-methionine</keyword>
<keyword id="KW-0784">Thiamine biosynthesis</keyword>
<keyword id="KW-0862">Zinc</keyword>
<organism>
    <name type="scientific">Bacillus subtilis (strain 168)</name>
    <dbReference type="NCBI Taxonomy" id="224308"/>
    <lineage>
        <taxon>Bacteria</taxon>
        <taxon>Bacillati</taxon>
        <taxon>Bacillota</taxon>
        <taxon>Bacilli</taxon>
        <taxon>Bacillales</taxon>
        <taxon>Bacillaceae</taxon>
        <taxon>Bacillus</taxon>
    </lineage>
</organism>
<reference key="1">
    <citation type="journal article" date="1997" name="Gene">
        <title>Cloning, sequencing and regulation of thiA, a thiamin biosynthesis gene from Bacillus subtilis.</title>
        <authorList>
            <person name="Zhang Y."/>
            <person name="Begley T.P."/>
        </authorList>
    </citation>
    <scope>NUCLEOTIDE SEQUENCE [GENOMIC DNA]</scope>
    <scope>FUNCTION</scope>
    <scope>INDUCTION</scope>
    <scope>DISRUPTION PHENOTYPE</scope>
    <source>
        <strain>168</strain>
    </source>
</reference>
<reference key="2">
    <citation type="journal article" date="1997" name="Microbiology">
        <title>The Bacillus subtilis 168 chromosome from sspE to katA.</title>
        <authorList>
            <person name="Cummings N.J."/>
            <person name="Connerton I.F."/>
        </authorList>
    </citation>
    <scope>NUCLEOTIDE SEQUENCE [GENOMIC DNA]</scope>
    <source>
        <strain>168</strain>
    </source>
</reference>
<reference key="3">
    <citation type="journal article" date="1997" name="Nature">
        <title>The complete genome sequence of the Gram-positive bacterium Bacillus subtilis.</title>
        <authorList>
            <person name="Kunst F."/>
            <person name="Ogasawara N."/>
            <person name="Moszer I."/>
            <person name="Albertini A.M."/>
            <person name="Alloni G."/>
            <person name="Azevedo V."/>
            <person name="Bertero M.G."/>
            <person name="Bessieres P."/>
            <person name="Bolotin A."/>
            <person name="Borchert S."/>
            <person name="Borriss R."/>
            <person name="Boursier L."/>
            <person name="Brans A."/>
            <person name="Braun M."/>
            <person name="Brignell S.C."/>
            <person name="Bron S."/>
            <person name="Brouillet S."/>
            <person name="Bruschi C.V."/>
            <person name="Caldwell B."/>
            <person name="Capuano V."/>
            <person name="Carter N.M."/>
            <person name="Choi S.-K."/>
            <person name="Codani J.-J."/>
            <person name="Connerton I.F."/>
            <person name="Cummings N.J."/>
            <person name="Daniel R.A."/>
            <person name="Denizot F."/>
            <person name="Devine K.M."/>
            <person name="Duesterhoeft A."/>
            <person name="Ehrlich S.D."/>
            <person name="Emmerson P.T."/>
            <person name="Entian K.-D."/>
            <person name="Errington J."/>
            <person name="Fabret C."/>
            <person name="Ferrari E."/>
            <person name="Foulger D."/>
            <person name="Fritz C."/>
            <person name="Fujita M."/>
            <person name="Fujita Y."/>
            <person name="Fuma S."/>
            <person name="Galizzi A."/>
            <person name="Galleron N."/>
            <person name="Ghim S.-Y."/>
            <person name="Glaser P."/>
            <person name="Goffeau A."/>
            <person name="Golightly E.J."/>
            <person name="Grandi G."/>
            <person name="Guiseppi G."/>
            <person name="Guy B.J."/>
            <person name="Haga K."/>
            <person name="Haiech J."/>
            <person name="Harwood C.R."/>
            <person name="Henaut A."/>
            <person name="Hilbert H."/>
            <person name="Holsappel S."/>
            <person name="Hosono S."/>
            <person name="Hullo M.-F."/>
            <person name="Itaya M."/>
            <person name="Jones L.-M."/>
            <person name="Joris B."/>
            <person name="Karamata D."/>
            <person name="Kasahara Y."/>
            <person name="Klaerr-Blanchard M."/>
            <person name="Klein C."/>
            <person name="Kobayashi Y."/>
            <person name="Koetter P."/>
            <person name="Koningstein G."/>
            <person name="Krogh S."/>
            <person name="Kumano M."/>
            <person name="Kurita K."/>
            <person name="Lapidus A."/>
            <person name="Lardinois S."/>
            <person name="Lauber J."/>
            <person name="Lazarevic V."/>
            <person name="Lee S.-M."/>
            <person name="Levine A."/>
            <person name="Liu H."/>
            <person name="Masuda S."/>
            <person name="Mauel C."/>
            <person name="Medigue C."/>
            <person name="Medina N."/>
            <person name="Mellado R.P."/>
            <person name="Mizuno M."/>
            <person name="Moestl D."/>
            <person name="Nakai S."/>
            <person name="Noback M."/>
            <person name="Noone D."/>
            <person name="O'Reilly M."/>
            <person name="Ogawa K."/>
            <person name="Ogiwara A."/>
            <person name="Oudega B."/>
            <person name="Park S.-H."/>
            <person name="Parro V."/>
            <person name="Pohl T.M."/>
            <person name="Portetelle D."/>
            <person name="Porwollik S."/>
            <person name="Prescott A.M."/>
            <person name="Presecan E."/>
            <person name="Pujic P."/>
            <person name="Purnelle B."/>
            <person name="Rapoport G."/>
            <person name="Rey M."/>
            <person name="Reynolds S."/>
            <person name="Rieger M."/>
            <person name="Rivolta C."/>
            <person name="Rocha E."/>
            <person name="Roche B."/>
            <person name="Rose M."/>
            <person name="Sadaie Y."/>
            <person name="Sato T."/>
            <person name="Scanlan E."/>
            <person name="Schleich S."/>
            <person name="Schroeter R."/>
            <person name="Scoffone F."/>
            <person name="Sekiguchi J."/>
            <person name="Sekowska A."/>
            <person name="Seror S.J."/>
            <person name="Serror P."/>
            <person name="Shin B.-S."/>
            <person name="Soldo B."/>
            <person name="Sorokin A."/>
            <person name="Tacconi E."/>
            <person name="Takagi T."/>
            <person name="Takahashi H."/>
            <person name="Takemaru K."/>
            <person name="Takeuchi M."/>
            <person name="Tamakoshi A."/>
            <person name="Tanaka T."/>
            <person name="Terpstra P."/>
            <person name="Tognoni A."/>
            <person name="Tosato V."/>
            <person name="Uchiyama S."/>
            <person name="Vandenbol M."/>
            <person name="Vannier F."/>
            <person name="Vassarotti A."/>
            <person name="Viari A."/>
            <person name="Wambutt R."/>
            <person name="Wedler E."/>
            <person name="Wedler H."/>
            <person name="Weitzenegger T."/>
            <person name="Winters P."/>
            <person name="Wipat A."/>
            <person name="Yamamoto H."/>
            <person name="Yamane K."/>
            <person name="Yasumoto K."/>
            <person name="Yata K."/>
            <person name="Yoshida K."/>
            <person name="Yoshikawa H.-F."/>
            <person name="Zumstein E."/>
            <person name="Yoshikawa H."/>
            <person name="Danchin A."/>
        </authorList>
    </citation>
    <scope>NUCLEOTIDE SEQUENCE [LARGE SCALE GENOMIC DNA]</scope>
    <source>
        <strain>168</strain>
    </source>
</reference>
<reference key="4">
    <citation type="journal article" date="2009" name="Microbiology">
        <title>From a consortium sequence to a unified sequence: the Bacillus subtilis 168 reference genome a decade later.</title>
        <authorList>
            <person name="Barbe V."/>
            <person name="Cruveiller S."/>
            <person name="Kunst F."/>
            <person name="Lenoble P."/>
            <person name="Meurice G."/>
            <person name="Sekowska A."/>
            <person name="Vallenet D."/>
            <person name="Wang T."/>
            <person name="Moszer I."/>
            <person name="Medigue C."/>
            <person name="Danchin A."/>
        </authorList>
    </citation>
    <scope>SEQUENCE REVISION TO 84</scope>
</reference>
<reference key="5">
    <citation type="journal article" date="2004" name="J. Biol. Chem.">
        <title>A genetic screen for the identification of thiamin metabolic genes.</title>
        <authorList>
            <person name="Lawhorn B.G."/>
            <person name="Gerdes S.Y."/>
            <person name="Begley T.P."/>
        </authorList>
    </citation>
    <scope>FUNCTION IN THIAMINE METABOLISM</scope>
</reference>
<sequence length="590" mass="65932">MQNNSVQQANISIMSSFSGSKKVYVEGSSSDIQVPMREIALSPTTGSFGEEENAPVRVYDTSGPYTDPEVTINIQEGLKPLRQKWITERGDVEEYEGRAIKPEDNGYKKAKPNVSYPGLKRKPLRAKAGQNVTQMHYAKKGIITPEMEFIAIREHVSPEFVRDEVASGRAIIPSNINHPESEPMIIGRNFHVKINANIGNSAVTSSIEEEVEKMTWAIRWGADTMMDLSTGKDIHTTREWIIRNCPVPVGTVPIYQALEKVNGVAEDLTWEIYRDTLIEQAEQGVDYFTIHAGVLLRYVPLTAKRTTGIVSRGGAIMAQWCLAHHQESFLYTHFEEICEIMKMYDIAFSLGDGLRPGSIADANDEAQFAELETLGELTQIAWKHDVQVMIEGPGHVPMHKIKENVDKQMDICKEAPFYTLGPLTTDIAPGYDHITSAIGAAMIGWYGTAMLCYVTPKEHLGLPNRDDVREGVITYKIAAHAADLAKGHPGAQIRDDALSKARFEFRWRDQFNLSLDPERALEYHDETLPAEGAKTAHFCSMCGPKFCSMRISQDIRDYAKKNDLSEAEAINKGLKEKAKEFVDTGSNLYQ</sequence>
<name>THIC_BACSU</name>